<dbReference type="EMBL" id="AP005672">
    <property type="protein sequence ID" value="BAC85075.1"/>
    <property type="molecule type" value="Genomic_DNA"/>
</dbReference>
<dbReference type="RefSeq" id="NP_904225.1">
    <property type="nucleotide sequence ID" value="NC_005087.2"/>
</dbReference>
<dbReference type="RefSeq" id="YP_009477555.1">
    <property type="nucleotide sequence ID" value="NC_037465.1"/>
</dbReference>
<dbReference type="SMR" id="Q6YXJ7"/>
<dbReference type="FunCoup" id="Q6YXJ7">
    <property type="interactions" value="83"/>
</dbReference>
<dbReference type="STRING" id="3218.Q6YXJ7"/>
<dbReference type="GeneID" id="2546788"/>
<dbReference type="GeneID" id="36487189"/>
<dbReference type="KEGG" id="ppp:2546788"/>
<dbReference type="InParanoid" id="Q6YXJ7"/>
<dbReference type="OrthoDB" id="10265903at2759"/>
<dbReference type="Proteomes" id="UP000006727">
    <property type="component" value="Chloroplast"/>
</dbReference>
<dbReference type="GO" id="GO:0009507">
    <property type="term" value="C:chloroplast"/>
    <property type="evidence" value="ECO:0007669"/>
    <property type="project" value="UniProtKB-SubCell"/>
</dbReference>
<dbReference type="GO" id="GO:1990904">
    <property type="term" value="C:ribonucleoprotein complex"/>
    <property type="evidence" value="ECO:0007669"/>
    <property type="project" value="UniProtKB-KW"/>
</dbReference>
<dbReference type="GO" id="GO:0005840">
    <property type="term" value="C:ribosome"/>
    <property type="evidence" value="ECO:0007669"/>
    <property type="project" value="UniProtKB-KW"/>
</dbReference>
<dbReference type="GO" id="GO:0003735">
    <property type="term" value="F:structural constituent of ribosome"/>
    <property type="evidence" value="ECO:0007669"/>
    <property type="project" value="InterPro"/>
</dbReference>
<dbReference type="GO" id="GO:0006412">
    <property type="term" value="P:translation"/>
    <property type="evidence" value="ECO:0007669"/>
    <property type="project" value="UniProtKB-UniRule"/>
</dbReference>
<dbReference type="HAMAP" id="MF_00251">
    <property type="entry name" value="Ribosomal_bL36"/>
    <property type="match status" value="1"/>
</dbReference>
<dbReference type="InterPro" id="IPR000473">
    <property type="entry name" value="Ribosomal_bL36"/>
</dbReference>
<dbReference type="InterPro" id="IPR035977">
    <property type="entry name" value="Ribosomal_bL36_sp"/>
</dbReference>
<dbReference type="NCBIfam" id="TIGR01022">
    <property type="entry name" value="rpmJ_bact"/>
    <property type="match status" value="1"/>
</dbReference>
<dbReference type="PANTHER" id="PTHR42888">
    <property type="entry name" value="50S RIBOSOMAL PROTEIN L36, CHLOROPLASTIC"/>
    <property type="match status" value="1"/>
</dbReference>
<dbReference type="PANTHER" id="PTHR42888:SF1">
    <property type="entry name" value="LARGE RIBOSOMAL SUBUNIT PROTEIN BL36C"/>
    <property type="match status" value="1"/>
</dbReference>
<dbReference type="Pfam" id="PF00444">
    <property type="entry name" value="Ribosomal_L36"/>
    <property type="match status" value="1"/>
</dbReference>
<dbReference type="SUPFAM" id="SSF57840">
    <property type="entry name" value="Ribosomal protein L36"/>
    <property type="match status" value="1"/>
</dbReference>
<dbReference type="PROSITE" id="PS00828">
    <property type="entry name" value="RIBOSOMAL_L36"/>
    <property type="match status" value="1"/>
</dbReference>
<protein>
    <recommendedName>
        <fullName evidence="1">Large ribosomal subunit protein bL36c</fullName>
    </recommendedName>
    <alternativeName>
        <fullName evidence="2">50S ribosomal protein L36, chloroplastic</fullName>
    </alternativeName>
</protein>
<evidence type="ECO:0000255" key="1">
    <source>
        <dbReference type="HAMAP-Rule" id="MF_00251"/>
    </source>
</evidence>
<evidence type="ECO:0000305" key="2"/>
<accession>Q6YXJ7</accession>
<gene>
    <name evidence="1" type="primary">rpl36</name>
</gene>
<geneLocation type="chloroplast"/>
<organism>
    <name type="scientific">Physcomitrium patens</name>
    <name type="common">Spreading-leaved earth moss</name>
    <name type="synonym">Physcomitrella patens</name>
    <dbReference type="NCBI Taxonomy" id="3218"/>
    <lineage>
        <taxon>Eukaryota</taxon>
        <taxon>Viridiplantae</taxon>
        <taxon>Streptophyta</taxon>
        <taxon>Embryophyta</taxon>
        <taxon>Bryophyta</taxon>
        <taxon>Bryophytina</taxon>
        <taxon>Bryopsida</taxon>
        <taxon>Funariidae</taxon>
        <taxon>Funariales</taxon>
        <taxon>Funariaceae</taxon>
        <taxon>Physcomitrium</taxon>
    </lineage>
</organism>
<comment type="subcellular location">
    <subcellularLocation>
        <location>Plastid</location>
        <location>Chloroplast</location>
    </subcellularLocation>
</comment>
<comment type="similarity">
    <text evidence="1">Belongs to the bacterial ribosomal protein bL36 family.</text>
</comment>
<reference key="1">
    <citation type="journal article" date="2003" name="Nucleic Acids Res.">
        <title>Complete chloroplast DNA sequence of the moss Physcomitrella patens: evidence for the loss and relocation of rpoA from the chloroplast to the nucleus.</title>
        <authorList>
            <person name="Sugiura C."/>
            <person name="Kobayashi Y."/>
            <person name="Setsuyuki A."/>
            <person name="Sugita C."/>
            <person name="Sugita M."/>
        </authorList>
    </citation>
    <scope>NUCLEOTIDE SEQUENCE [LARGE SCALE GENOMIC DNA]</scope>
    <source>
        <strain>cv. Gransden 2004</strain>
    </source>
</reference>
<feature type="chain" id="PRO_0000126338" description="Large ribosomal subunit protein bL36c">
    <location>
        <begin position="1"/>
        <end position="37"/>
    </location>
</feature>
<proteinExistence type="inferred from homology"/>
<sequence>MKVRASVKKICDNCRLIRRRKRIMVVCSNPKHKQRQG</sequence>
<name>RK36_PHYPA</name>
<keyword id="KW-0150">Chloroplast</keyword>
<keyword id="KW-0934">Plastid</keyword>
<keyword id="KW-1185">Reference proteome</keyword>
<keyword id="KW-0687">Ribonucleoprotein</keyword>
<keyword id="KW-0689">Ribosomal protein</keyword>